<gene>
    <name evidence="2" type="primary">rplN</name>
    <name type="ordered locus">DR_0321</name>
</gene>
<accession>Q9RXJ2</accession>
<keyword id="KW-0002">3D-structure</keyword>
<keyword id="KW-0903">Direct protein sequencing</keyword>
<keyword id="KW-1185">Reference proteome</keyword>
<keyword id="KW-0687">Ribonucleoprotein</keyword>
<keyword id="KW-0689">Ribosomal protein</keyword>
<keyword id="KW-0694">RNA-binding</keyword>
<keyword id="KW-0699">rRNA-binding</keyword>
<name>RL14_DEIRA</name>
<organism>
    <name type="scientific">Deinococcus radiodurans (strain ATCC 13939 / DSM 20539 / JCM 16871 / CCUG 27074 / LMG 4051 / NBRC 15346 / NCIMB 9279 / VKM B-1422 / R1)</name>
    <dbReference type="NCBI Taxonomy" id="243230"/>
    <lineage>
        <taxon>Bacteria</taxon>
        <taxon>Thermotogati</taxon>
        <taxon>Deinococcota</taxon>
        <taxon>Deinococci</taxon>
        <taxon>Deinococcales</taxon>
        <taxon>Deinococcaceae</taxon>
        <taxon>Deinococcus</taxon>
    </lineage>
</organism>
<proteinExistence type="evidence at protein level"/>
<dbReference type="EMBL" id="AE000513">
    <property type="protein sequence ID" value="AAF09902.1"/>
    <property type="molecule type" value="Genomic_DNA"/>
</dbReference>
<dbReference type="PIR" id="A75535">
    <property type="entry name" value="A75535"/>
</dbReference>
<dbReference type="RefSeq" id="NP_294044.1">
    <property type="nucleotide sequence ID" value="NC_001263.1"/>
</dbReference>
<dbReference type="RefSeq" id="WP_010886966.1">
    <property type="nucleotide sequence ID" value="NZ_JMLF01000001.1"/>
</dbReference>
<dbReference type="PDB" id="1NKW">
    <property type="method" value="X-ray"/>
    <property type="resolution" value="3.10 A"/>
    <property type="chains" value="I=1-134"/>
</dbReference>
<dbReference type="PDB" id="1NWX">
    <property type="method" value="X-ray"/>
    <property type="resolution" value="3.50 A"/>
    <property type="chains" value="I=1-134"/>
</dbReference>
<dbReference type="PDB" id="1NWY">
    <property type="method" value="X-ray"/>
    <property type="resolution" value="3.30 A"/>
    <property type="chains" value="I=1-134"/>
</dbReference>
<dbReference type="PDB" id="1SM1">
    <property type="method" value="X-ray"/>
    <property type="resolution" value="3.42 A"/>
    <property type="chains" value="I=1-134"/>
</dbReference>
<dbReference type="PDB" id="1XBP">
    <property type="method" value="X-ray"/>
    <property type="resolution" value="3.50 A"/>
    <property type="chains" value="I=1-134"/>
</dbReference>
<dbReference type="PDB" id="2ZJP">
    <property type="method" value="X-ray"/>
    <property type="resolution" value="3.70 A"/>
    <property type="chains" value="H=1-134"/>
</dbReference>
<dbReference type="PDB" id="2ZJQ">
    <property type="method" value="X-ray"/>
    <property type="resolution" value="3.30 A"/>
    <property type="chains" value="H=1-134"/>
</dbReference>
<dbReference type="PDB" id="2ZJR">
    <property type="method" value="X-ray"/>
    <property type="resolution" value="2.91 A"/>
    <property type="chains" value="H=1-134"/>
</dbReference>
<dbReference type="PDB" id="3CF5">
    <property type="method" value="X-ray"/>
    <property type="resolution" value="3.30 A"/>
    <property type="chains" value="H=1-134"/>
</dbReference>
<dbReference type="PDB" id="3DLL">
    <property type="method" value="X-ray"/>
    <property type="resolution" value="3.50 A"/>
    <property type="chains" value="H=1-134"/>
</dbReference>
<dbReference type="PDB" id="3PIO">
    <property type="method" value="X-ray"/>
    <property type="resolution" value="3.25 A"/>
    <property type="chains" value="H=1-134"/>
</dbReference>
<dbReference type="PDB" id="3PIP">
    <property type="method" value="X-ray"/>
    <property type="resolution" value="3.45 A"/>
    <property type="chains" value="H=1-134"/>
</dbReference>
<dbReference type="PDB" id="4IO9">
    <property type="method" value="X-ray"/>
    <property type="resolution" value="3.20 A"/>
    <property type="chains" value="H=1-134"/>
</dbReference>
<dbReference type="PDB" id="4IOA">
    <property type="method" value="X-ray"/>
    <property type="resolution" value="3.20 A"/>
    <property type="chains" value="H=1-134"/>
</dbReference>
<dbReference type="PDB" id="4IOC">
    <property type="method" value="X-ray"/>
    <property type="resolution" value="3.60 A"/>
    <property type="chains" value="H=1-134"/>
</dbReference>
<dbReference type="PDB" id="4U67">
    <property type="method" value="X-ray"/>
    <property type="resolution" value="3.65 A"/>
    <property type="chains" value="H=1-134"/>
</dbReference>
<dbReference type="PDB" id="4V49">
    <property type="method" value="X-ray"/>
    <property type="resolution" value="8.70 A"/>
    <property type="chains" value="I=2-133"/>
</dbReference>
<dbReference type="PDB" id="4V4A">
    <property type="method" value="X-ray"/>
    <property type="resolution" value="9.50 A"/>
    <property type="chains" value="I=2-133"/>
</dbReference>
<dbReference type="PDB" id="4V4G">
    <property type="method" value="X-ray"/>
    <property type="resolution" value="11.50 A"/>
    <property type="chains" value="L=2-133"/>
</dbReference>
<dbReference type="PDB" id="4WFN">
    <property type="method" value="X-ray"/>
    <property type="resolution" value="3.54 A"/>
    <property type="chains" value="H=1-134"/>
</dbReference>
<dbReference type="PDB" id="5DM6">
    <property type="method" value="X-ray"/>
    <property type="resolution" value="2.90 A"/>
    <property type="chains" value="H=1-134"/>
</dbReference>
<dbReference type="PDB" id="5DM7">
    <property type="method" value="X-ray"/>
    <property type="resolution" value="3.00 A"/>
    <property type="chains" value="H=1-134"/>
</dbReference>
<dbReference type="PDB" id="5JVG">
    <property type="method" value="X-ray"/>
    <property type="resolution" value="3.43 A"/>
    <property type="chains" value="H=1-134"/>
</dbReference>
<dbReference type="PDB" id="5JVH">
    <property type="method" value="X-ray"/>
    <property type="resolution" value="3.58 A"/>
    <property type="chains" value="H=1-134"/>
</dbReference>
<dbReference type="PDB" id="7A0R">
    <property type="method" value="X-ray"/>
    <property type="resolution" value="3.30 A"/>
    <property type="chains" value="H=1-134"/>
</dbReference>
<dbReference type="PDB" id="7A0S">
    <property type="method" value="X-ray"/>
    <property type="resolution" value="3.22 A"/>
    <property type="chains" value="H=1-134"/>
</dbReference>
<dbReference type="PDB" id="7A18">
    <property type="method" value="X-ray"/>
    <property type="resolution" value="3.40 A"/>
    <property type="chains" value="H=1-134"/>
</dbReference>
<dbReference type="PDBsum" id="1NKW"/>
<dbReference type="PDBsum" id="1NWX"/>
<dbReference type="PDBsum" id="1NWY"/>
<dbReference type="PDBsum" id="1SM1"/>
<dbReference type="PDBsum" id="1XBP"/>
<dbReference type="PDBsum" id="2ZJP"/>
<dbReference type="PDBsum" id="2ZJQ"/>
<dbReference type="PDBsum" id="2ZJR"/>
<dbReference type="PDBsum" id="3CF5"/>
<dbReference type="PDBsum" id="3DLL"/>
<dbReference type="PDBsum" id="3PIO"/>
<dbReference type="PDBsum" id="3PIP"/>
<dbReference type="PDBsum" id="4IO9"/>
<dbReference type="PDBsum" id="4IOA"/>
<dbReference type="PDBsum" id="4IOC"/>
<dbReference type="PDBsum" id="4U67"/>
<dbReference type="PDBsum" id="4V49"/>
<dbReference type="PDBsum" id="4V4A"/>
<dbReference type="PDBsum" id="4V4G"/>
<dbReference type="PDBsum" id="4WFN"/>
<dbReference type="PDBsum" id="5DM6"/>
<dbReference type="PDBsum" id="5DM7"/>
<dbReference type="PDBsum" id="5JVG"/>
<dbReference type="PDBsum" id="5JVH"/>
<dbReference type="PDBsum" id="7A0R"/>
<dbReference type="PDBsum" id="7A0S"/>
<dbReference type="PDBsum" id="7A18"/>
<dbReference type="SMR" id="Q9RXJ2"/>
<dbReference type="FunCoup" id="Q9RXJ2">
    <property type="interactions" value="451"/>
</dbReference>
<dbReference type="IntAct" id="Q9RXJ2">
    <property type="interactions" value="1"/>
</dbReference>
<dbReference type="STRING" id="243230.DR_0321"/>
<dbReference type="PaxDb" id="243230-DR_0321"/>
<dbReference type="EnsemblBacteria" id="AAF09902">
    <property type="protein sequence ID" value="AAF09902"/>
    <property type="gene ID" value="DR_0321"/>
</dbReference>
<dbReference type="GeneID" id="69516553"/>
<dbReference type="KEGG" id="dra:DR_0321"/>
<dbReference type="PATRIC" id="fig|243230.17.peg.487"/>
<dbReference type="eggNOG" id="COG0093">
    <property type="taxonomic scope" value="Bacteria"/>
</dbReference>
<dbReference type="HOGENOM" id="CLU_095071_2_1_0"/>
<dbReference type="InParanoid" id="Q9RXJ2"/>
<dbReference type="OrthoDB" id="9806379at2"/>
<dbReference type="EvolutionaryTrace" id="Q9RXJ2"/>
<dbReference type="Proteomes" id="UP000002524">
    <property type="component" value="Chromosome 1"/>
</dbReference>
<dbReference type="GO" id="GO:0022625">
    <property type="term" value="C:cytosolic large ribosomal subunit"/>
    <property type="evidence" value="ECO:0000318"/>
    <property type="project" value="GO_Central"/>
</dbReference>
<dbReference type="GO" id="GO:0070180">
    <property type="term" value="F:large ribosomal subunit rRNA binding"/>
    <property type="evidence" value="ECO:0000318"/>
    <property type="project" value="GO_Central"/>
</dbReference>
<dbReference type="GO" id="GO:0003735">
    <property type="term" value="F:structural constituent of ribosome"/>
    <property type="evidence" value="ECO:0000318"/>
    <property type="project" value="GO_Central"/>
</dbReference>
<dbReference type="GO" id="GO:0006412">
    <property type="term" value="P:translation"/>
    <property type="evidence" value="ECO:0007669"/>
    <property type="project" value="UniProtKB-UniRule"/>
</dbReference>
<dbReference type="CDD" id="cd00337">
    <property type="entry name" value="Ribosomal_uL14"/>
    <property type="match status" value="1"/>
</dbReference>
<dbReference type="FunFam" id="2.40.150.20:FF:000001">
    <property type="entry name" value="50S ribosomal protein L14"/>
    <property type="match status" value="1"/>
</dbReference>
<dbReference type="Gene3D" id="2.40.150.20">
    <property type="entry name" value="Ribosomal protein L14"/>
    <property type="match status" value="1"/>
</dbReference>
<dbReference type="HAMAP" id="MF_01367">
    <property type="entry name" value="Ribosomal_uL14"/>
    <property type="match status" value="1"/>
</dbReference>
<dbReference type="InterPro" id="IPR000218">
    <property type="entry name" value="Ribosomal_uL14"/>
</dbReference>
<dbReference type="InterPro" id="IPR005745">
    <property type="entry name" value="Ribosomal_uL14_bac-type"/>
</dbReference>
<dbReference type="InterPro" id="IPR019972">
    <property type="entry name" value="Ribosomal_uL14_CS"/>
</dbReference>
<dbReference type="InterPro" id="IPR036853">
    <property type="entry name" value="Ribosomal_uL14_sf"/>
</dbReference>
<dbReference type="NCBIfam" id="TIGR01067">
    <property type="entry name" value="rplN_bact"/>
    <property type="match status" value="1"/>
</dbReference>
<dbReference type="PANTHER" id="PTHR11761">
    <property type="entry name" value="50S/60S RIBOSOMAL PROTEIN L14/L23"/>
    <property type="match status" value="1"/>
</dbReference>
<dbReference type="PANTHER" id="PTHR11761:SF3">
    <property type="entry name" value="LARGE RIBOSOMAL SUBUNIT PROTEIN UL14M"/>
    <property type="match status" value="1"/>
</dbReference>
<dbReference type="Pfam" id="PF00238">
    <property type="entry name" value="Ribosomal_L14"/>
    <property type="match status" value="1"/>
</dbReference>
<dbReference type="SMART" id="SM01374">
    <property type="entry name" value="Ribosomal_L14"/>
    <property type="match status" value="1"/>
</dbReference>
<dbReference type="SUPFAM" id="SSF50193">
    <property type="entry name" value="Ribosomal protein L14"/>
    <property type="match status" value="1"/>
</dbReference>
<dbReference type="PROSITE" id="PS00049">
    <property type="entry name" value="RIBOSOMAL_L14"/>
    <property type="match status" value="1"/>
</dbReference>
<comment type="function">
    <text evidence="1">Forms part of two intersubunit bridges in the 70S ribosome (By similarity). Binds to 23S rRNA.</text>
</comment>
<comment type="subunit">
    <text evidence="1 3 4 5 6 7 8">In the 70S ribosome, L14 and L19 interact and together make contacts with the 16S rRNA in bridges B5 and B8 (By similarity). Part of the 50S ribosomal subunit. Forms a cluster with proteins L3 and L19.</text>
</comment>
<comment type="similarity">
    <text evidence="2">Belongs to the universal ribosomal protein uL14 family.</text>
</comment>
<evidence type="ECO:0000250" key="1"/>
<evidence type="ECO:0000255" key="2">
    <source>
        <dbReference type="HAMAP-Rule" id="MF_01367"/>
    </source>
</evidence>
<evidence type="ECO:0000269" key="3">
    <source>
    </source>
</evidence>
<evidence type="ECO:0000269" key="4">
    <source>
    </source>
</evidence>
<evidence type="ECO:0000269" key="5">
    <source>
    </source>
</evidence>
<evidence type="ECO:0000269" key="6">
    <source>
    </source>
</evidence>
<evidence type="ECO:0000269" key="7">
    <source>
    </source>
</evidence>
<evidence type="ECO:0000269" key="8">
    <source>
    </source>
</evidence>
<evidence type="ECO:0000305" key="9"/>
<evidence type="ECO:0007829" key="10">
    <source>
        <dbReference type="PDB" id="3PIP"/>
    </source>
</evidence>
<evidence type="ECO:0007829" key="11">
    <source>
        <dbReference type="PDB" id="4IO9"/>
    </source>
</evidence>
<evidence type="ECO:0007829" key="12">
    <source>
        <dbReference type="PDB" id="5DM6"/>
    </source>
</evidence>
<evidence type="ECO:0007829" key="13">
    <source>
        <dbReference type="PDB" id="7A0S"/>
    </source>
</evidence>
<feature type="chain" id="PRO_0000128539" description="Large ribosomal subunit protein uL14">
    <location>
        <begin position="1"/>
        <end position="134"/>
    </location>
</feature>
<feature type="strand" evidence="12">
    <location>
        <begin position="7"/>
        <end position="10"/>
    </location>
</feature>
<feature type="strand" evidence="12">
    <location>
        <begin position="15"/>
        <end position="23"/>
    </location>
</feature>
<feature type="strand" evidence="12">
    <location>
        <begin position="31"/>
        <end position="34"/>
    </location>
</feature>
<feature type="strand" evidence="10">
    <location>
        <begin position="38"/>
        <end position="40"/>
    </location>
</feature>
<feature type="strand" evidence="12">
    <location>
        <begin position="50"/>
        <end position="58"/>
    </location>
</feature>
<feature type="strand" evidence="12">
    <location>
        <begin position="60"/>
        <end position="64"/>
    </location>
</feature>
<feature type="strand" evidence="12">
    <location>
        <begin position="72"/>
        <end position="76"/>
    </location>
</feature>
<feature type="strand" evidence="13">
    <location>
        <begin position="84"/>
        <end position="86"/>
    </location>
</feature>
<feature type="strand" evidence="12">
    <location>
        <begin position="88"/>
        <end position="93"/>
    </location>
</feature>
<feature type="strand" evidence="12">
    <location>
        <begin position="95"/>
        <end position="99"/>
    </location>
</feature>
<feature type="strand" evidence="12">
    <location>
        <begin position="105"/>
        <end position="108"/>
    </location>
</feature>
<feature type="strand" evidence="11">
    <location>
        <begin position="112"/>
        <end position="114"/>
    </location>
</feature>
<feature type="helix" evidence="12">
    <location>
        <begin position="117"/>
        <end position="120"/>
    </location>
</feature>
<feature type="helix" evidence="12">
    <location>
        <begin position="124"/>
        <end position="129"/>
    </location>
</feature>
<feature type="strand" evidence="11">
    <location>
        <begin position="131"/>
        <end position="133"/>
    </location>
</feature>
<reference key="1">
    <citation type="journal article" date="1999" name="Science">
        <title>Genome sequence of the radioresistant bacterium Deinococcus radiodurans R1.</title>
        <authorList>
            <person name="White O."/>
            <person name="Eisen J.A."/>
            <person name="Heidelberg J.F."/>
            <person name="Hickey E.K."/>
            <person name="Peterson J.D."/>
            <person name="Dodson R.J."/>
            <person name="Haft D.H."/>
            <person name="Gwinn M.L."/>
            <person name="Nelson W.C."/>
            <person name="Richardson D.L."/>
            <person name="Moffat K.S."/>
            <person name="Qin H."/>
            <person name="Jiang L."/>
            <person name="Pamphile W."/>
            <person name="Crosby M."/>
            <person name="Shen M."/>
            <person name="Vamathevan J.J."/>
            <person name="Lam P."/>
            <person name="McDonald L.A."/>
            <person name="Utterback T.R."/>
            <person name="Zalewski C."/>
            <person name="Makarova K.S."/>
            <person name="Aravind L."/>
            <person name="Daly M.J."/>
            <person name="Minton K.W."/>
            <person name="Fleischmann R.D."/>
            <person name="Ketchum K.A."/>
            <person name="Nelson K.E."/>
            <person name="Salzberg S.L."/>
            <person name="Smith H.O."/>
            <person name="Venter J.C."/>
            <person name="Fraser C.M."/>
        </authorList>
    </citation>
    <scope>NUCLEOTIDE SEQUENCE [LARGE SCALE GENOMIC DNA]</scope>
    <source>
        <strain>ATCC 13939 / DSM 20539 / JCM 16871 / CCUG 27074 / LMG 4051 / NBRC 15346 / NCIMB 9279 / VKM B-1422 / R1</strain>
    </source>
</reference>
<reference key="2">
    <citation type="journal article" date="2001" name="Cell">
        <title>High resolution structure of the large ribosomal subunit from a mesophilic eubacterium.</title>
        <authorList>
            <person name="Harms J."/>
            <person name="Schluenzen F."/>
            <person name="Zarivach R."/>
            <person name="Bashan A."/>
            <person name="Gat S."/>
            <person name="Agmon I."/>
            <person name="Bartels H."/>
            <person name="Franceschi F."/>
            <person name="Yonath A."/>
        </authorList>
    </citation>
    <scope>X-RAY CRYSTALLOGRAPHY (3.1 ANGSTROMS) OF THE 50S SUBUNIT</scope>
    <scope>PROTEIN SEQUENCE OF 1-5</scope>
    <source>
        <strain>ATCC 13939 / DSM 20539 / JCM 16871 / CCUG 27074 / LMG 4051 / NBRC 15346 / NCIMB 9279 / VKM B-1422 / R1</strain>
    </source>
</reference>
<reference key="3">
    <citation type="journal article" date="2001" name="Nature">
        <title>Structural basis for the interaction of antibiotics with the peptidyl transferase centre in eubacteria.</title>
        <authorList>
            <person name="Schluenzen F."/>
            <person name="Zarivach R."/>
            <person name="Harms J."/>
            <person name="Bashan A."/>
            <person name="Tocilj A."/>
            <person name="Albrecht R."/>
            <person name="Yonath A."/>
            <person name="Franceschi F."/>
        </authorList>
    </citation>
    <scope>X-RAY CRYSTALLOGRAPHY (3.1 ANGSTROMS) OF THE 50S SUBUNIT IN COMPLEX WITH FIVE ANTIBIOTICS</scope>
    <source>
        <strain>ATCC 13939 / DSM 20539 / JCM 16871 / CCUG 27074 / LMG 4051 / NBRC 15346 / NCIMB 9279 / VKM B-1422 / R1</strain>
    </source>
</reference>
<reference key="4">
    <citation type="journal article" date="2003" name="Mol. Cell">
        <title>Structural basis of the ribosomal machinery for peptide bond formation, translocation, and nascent chain progression.</title>
        <authorList>
            <person name="Bashan A."/>
            <person name="Agmon I."/>
            <person name="Zarivach R."/>
            <person name="Schluenzen F."/>
            <person name="Harms J."/>
            <person name="Berisio R."/>
            <person name="Bartels H."/>
            <person name="Franceschi F."/>
            <person name="Auerbach T."/>
            <person name="Hansen H.A."/>
            <person name="Kossoy E."/>
            <person name="Kessler M."/>
            <person name="Yonath A."/>
        </authorList>
    </citation>
    <scope>X-RAY CRYSTALLOGRAPHY (3.5 ANGSTROMS) OF THE 50S SUBUNIT IN COMPLEX WITH TRNA MIMICS</scope>
    <source>
        <strain>ATCC 13939 / DSM 20539 / JCM 16871 / CCUG 27074 / LMG 4051 / NBRC 15346 / NCIMB 9279 / VKM B-1422 / R1</strain>
    </source>
</reference>
<reference key="5">
    <citation type="journal article" date="2003" name="Structure">
        <title>Structural basis for the antibiotic activity of ketolides and azalides.</title>
        <authorList>
            <person name="Schluenzen F."/>
            <person name="Harms J.M."/>
            <person name="Franceschi F."/>
            <person name="Hansen H.A."/>
            <person name="Bartels H."/>
            <person name="Zarivach R."/>
            <person name="Yonath A."/>
        </authorList>
    </citation>
    <scope>X-RAY CRYSTALLOGRAPHY (3.3 ANGSTROMS) OF THE 50S SUBUNIT IN COMPLEX WITH MODIFIED MACROLIDE ANTIBIOTICS</scope>
    <source>
        <strain>ATCC 13939 / DSM 20539 / JCM 16871 / CCUG 27074 / LMG 4051 / NBRC 15346 / NCIMB 9279 / VKM B-1422 / R1</strain>
    </source>
</reference>
<reference key="6">
    <citation type="journal article" date="2003" name="Nat. Struct. Biol.">
        <title>Structural insight into the role of the ribosomal tunnel in cellular regulation.</title>
        <authorList>
            <person name="Berisio R."/>
            <person name="Schluenzen F."/>
            <person name="Harms J."/>
            <person name="Bashan A."/>
            <person name="Auerbach T."/>
            <person name="Baram D."/>
            <person name="Yonath A."/>
        </authorList>
    </citation>
    <scope>X-RAY CRYSTALLOGRAPHY (3.4 ANGSTROMS) OF THE 50S SUBUNIT IN COMPLEX WITH TROLEANDOMYCIN</scope>
    <source>
        <strain>ATCC 13939 / DSM 20539 / JCM 16871 / CCUG 27074 / LMG 4051 / NBRC 15346 / NCIMB 9279 / VKM B-1422 / R1</strain>
    </source>
</reference>
<reference key="7">
    <citation type="journal article" date="2004" name="BMC Biol.">
        <title>Alterations at the peptidyl transferase centre of the ribosome induced by the synergistic action of the streptogramins dalfopristin and quinupristin.</title>
        <authorList>
            <person name="Harms J.M."/>
            <person name="Schluenzen F."/>
            <person name="Fucini P."/>
            <person name="Bartels H."/>
            <person name="Yonath A."/>
        </authorList>
    </citation>
    <scope>X-RAY CRYSTALLOGRAPHY (3.4 ANGSTROMS) OF THE 50S SUBUNIT IN COMPLEX WITH THE STREPTOGRAMINS QUINUPRISTIN AND DALFOPRISTIN</scope>
    <source>
        <strain>ATCC 13939 / DSM 20539 / JCM 16871 / CCUG 27074 / LMG 4051 / NBRC 15346 / NCIMB 9279 / VKM B-1422 / R1</strain>
    </source>
</reference>
<reference key="8">
    <citation type="journal article" date="2004" name="Mol. Microbiol.">
        <title>Inhibition of peptide bond formation by pleuromutilins: the structure of the 50S ribosomal subunit from Deinococcus radiodurans in complex with tiamulin.</title>
        <authorList>
            <person name="Schluenzen F."/>
            <person name="Pyetan E."/>
            <person name="Fucini P."/>
            <person name="Yonath A."/>
            <person name="Harms J.M."/>
        </authorList>
    </citation>
    <scope>X-RAY CRYSTALLOGRAPHY (3.5 ANGSTROMS) OF THE 50S SUBUNIT IN COMPLEX WITH TIAMULIN</scope>
    <source>
        <strain>ATCC 13939 / DSM 20539 / JCM 16871 / CCUG 27074 / LMG 4051 / NBRC 15346 / NCIMB 9279 / VKM B-1422 / R1</strain>
    </source>
</reference>
<sequence>MIMPQSRLDVADNSGAREIMCIRVLNSGIGGKGLTTGGGGNKRYAHVGDIIVASVKDAAPRGAVKAGDVVKAVVVRTSHAIKRADGSTIRFDRNAAVIINNQGEPRGTRVFGPVARELRDRRFMKIVSLAPEVL</sequence>
<protein>
    <recommendedName>
        <fullName evidence="2">Large ribosomal subunit protein uL14</fullName>
    </recommendedName>
    <alternativeName>
        <fullName evidence="9">50S ribosomal protein L14</fullName>
    </alternativeName>
</protein>